<organism>
    <name type="scientific">Mus musculus</name>
    <name type="common">Mouse</name>
    <dbReference type="NCBI Taxonomy" id="10090"/>
    <lineage>
        <taxon>Eukaryota</taxon>
        <taxon>Metazoa</taxon>
        <taxon>Chordata</taxon>
        <taxon>Craniata</taxon>
        <taxon>Vertebrata</taxon>
        <taxon>Euteleostomi</taxon>
        <taxon>Mammalia</taxon>
        <taxon>Eutheria</taxon>
        <taxon>Euarchontoglires</taxon>
        <taxon>Glires</taxon>
        <taxon>Rodentia</taxon>
        <taxon>Myomorpha</taxon>
        <taxon>Muroidea</taxon>
        <taxon>Muridae</taxon>
        <taxon>Murinae</taxon>
        <taxon>Mus</taxon>
        <taxon>Mus</taxon>
    </lineage>
</organism>
<protein>
    <recommendedName>
        <fullName>Peroxiredoxin-1</fullName>
        <ecNumber evidence="2">1.11.1.24</ecNumber>
    </recommendedName>
    <alternativeName>
        <fullName>Macrophage 23 kDa stress protein</fullName>
    </alternativeName>
    <alternativeName>
        <fullName>Osteoblast-specific factor 3</fullName>
        <shortName>OSF-3</shortName>
    </alternativeName>
    <alternativeName>
        <fullName>Thioredoxin peroxidase 2</fullName>
    </alternativeName>
    <alternativeName>
        <fullName>Thioredoxin-dependent peroxide reductase 2</fullName>
    </alternativeName>
    <alternativeName>
        <fullName evidence="6">Thioredoxin-dependent peroxiredoxin 1</fullName>
    </alternativeName>
</protein>
<accession>P35700</accession>
<accession>Q3UBV4</accession>
<accession>Q9CWI2</accession>
<sequence>MSSGNAKIGYPAPNFKATAVMPDGQFKDISLSEYKGKYVVFFFYPLDFTFVCPTEIIAFSDRADEFKKLNCQVIGASVDSHFCHLAWINTPKKQGGLGPMNIPLISDPKRTIAQDYGVLKADEGISFRGLFIIDDKGILRQITINDLPVGRSVDEIIRLVQAFQFTDKHGEVCPAGWKPGSDTIKPDVNKSKEYFSKQK</sequence>
<comment type="function">
    <text evidence="2 4">Thiol-specific peroxidase that catalyzes the reduction of hydrogen peroxide and organic hydroperoxides to water and alcohols, respectively. Plays a role in cell protection against oxidative stress by detoxifying peroxides and as sensor of hydrogen peroxide-mediated signaling events. Might participate in the signaling cascades of growth factors and tumor necrosis factor-alpha by regulating the intracellular concentrations of H(2)O(2) (By similarity). Reduces an intramolecular disulfide bond in GDPD5 that gates the ability to GDPD5 to drive postmitotic motor neuron differentiation (PubMed:19766572).</text>
</comment>
<comment type="catalytic activity">
    <reaction evidence="2">
        <text>a hydroperoxide + [thioredoxin]-dithiol = an alcohol + [thioredoxin]-disulfide + H2O</text>
        <dbReference type="Rhea" id="RHEA:62620"/>
        <dbReference type="Rhea" id="RHEA-COMP:10698"/>
        <dbReference type="Rhea" id="RHEA-COMP:10700"/>
        <dbReference type="ChEBI" id="CHEBI:15377"/>
        <dbReference type="ChEBI" id="CHEBI:29950"/>
        <dbReference type="ChEBI" id="CHEBI:30879"/>
        <dbReference type="ChEBI" id="CHEBI:35924"/>
        <dbReference type="ChEBI" id="CHEBI:50058"/>
        <dbReference type="EC" id="1.11.1.24"/>
    </reaction>
</comment>
<comment type="subunit">
    <text evidence="1 2 5">Homodimer; disulfide-linked, upon oxidation. 5 homodimers assemble to form a ring-like decamer (By similarity). Interacts with GDPD5; forms a mixed-disulfide with GDPD5 (By similarity). Interacts with SESN1 and SESN2 (By similarity). Interacts with FAM107A (PubMed:21969592).</text>
</comment>
<comment type="interaction">
    <interactant intactId="EBI-444948">
        <id>P35700</id>
    </interactant>
    <interactant intactId="EBI-444948">
        <id>P35700</id>
        <label>Prdx1</label>
    </interactant>
    <organismsDiffer>false</organismsDiffer>
    <experiments>2</experiments>
</comment>
<comment type="interaction">
    <interactant intactId="EBI-444948">
        <id>P35700</id>
    </interactant>
    <interactant intactId="EBI-367376">
        <id>Q13043</id>
        <label>STK4</label>
    </interactant>
    <organismsDiffer>true</organismsDiffer>
    <experiments>3</experiments>
</comment>
<comment type="subcellular location">
    <subcellularLocation>
        <location evidence="2">Cytoplasm</location>
    </subcellularLocation>
</comment>
<comment type="tissue specificity">
    <text>Found in various tissues; high concentration in liver.</text>
</comment>
<comment type="induction">
    <text>By oxidative and sulfhydryl-reactive agents.</text>
</comment>
<comment type="PTM">
    <text evidence="2">Phosphorylated on Thr-90 during the M-phase, which leads to a decrease in enzymatic activity.</text>
</comment>
<comment type="PTM">
    <text evidence="2">Acetylation increases reducing activity and resistance to superoxidation. Deacetylated by HDAC6 which decreases reducing activity.</text>
</comment>
<comment type="disruption phenotype">
    <text evidence="4">Mice embryos loss approximately 50% of Islet1/Islet2+ and HB9+ motor neurons, whereas dorsal-ventral patterning events and the numbers of Olig2+ progenitors are normal. Toward the end of the cell death phase they have equivalent numbers of motor neurons as wild type embryos.</text>
</comment>
<comment type="miscellaneous">
    <text evidence="2">The active site is a conserved redox-active cysteine residue, the peroxidatic cysteine (C(P)), which makes the nucleophilic attack on the peroxide substrate. The peroxide oxidizes the C(P)-SH to cysteine sulfenic acid (C(P)-SOH), which then reacts with another cysteine residue, the resolving cysteine (C(R)), to form a disulfide bridge. The disulfide is subsequently reduced by an appropriate electron donor to complete the catalytic cycle. In this typical 2-Cys peroxiredoxin, C(R) is provided by the other dimeric subunit to form an intersubunit disulfide. The disulfide is subsequently reduced by thioredoxin.</text>
</comment>
<comment type="similarity">
    <text evidence="6">Belongs to the peroxiredoxin family. AhpC/Prx1 subfamily.</text>
</comment>
<reference key="1">
    <citation type="journal article" date="1993" name="J. Biol. Chem.">
        <title>Cloning and characterization of a 23-kDa stress-induced mouse peritoneal macrophage protein.</title>
        <authorList>
            <person name="Ishii T."/>
            <person name="Yamada M."/>
            <person name="Sato H."/>
            <person name="Matsue M."/>
            <person name="Taketani S."/>
            <person name="Nakayama K."/>
            <person name="Sugita Y."/>
            <person name="Bannai S."/>
        </authorList>
    </citation>
    <scope>NUCLEOTIDE SEQUENCE [MRNA]</scope>
    <source>
        <tissue>Peritoneal macrophage</tissue>
    </source>
</reference>
<reference key="2">
    <citation type="journal article" date="1994" name="J. Biochem.">
        <title>Cloning and characterization of OSF-3, a new member of the MER5 family, expressed in mouse osteoblastic cells.</title>
        <authorList>
            <person name="Kawai S."/>
            <person name="Takeshita S."/>
            <person name="Okazaki M."/>
            <person name="Kikuno R."/>
            <person name="Kudo A."/>
            <person name="Amann E."/>
        </authorList>
    </citation>
    <scope>NUCLEOTIDE SEQUENCE [MRNA]</scope>
    <source>
        <strain>C57BL/6J</strain>
        <tissue>Osteoblast</tissue>
    </source>
</reference>
<reference key="3">
    <citation type="journal article" date="1999" name="Gene">
        <title>Characterization of mouse peroxiredoxin I genomic DNA and its expression.</title>
        <authorList>
            <person name="Lee T.-H."/>
            <person name="Yu S.-L."/>
            <person name="Kim S.-U."/>
            <person name="Lee K.-K."/>
            <person name="Rhee S.G."/>
            <person name="Yu D.-Y."/>
        </authorList>
    </citation>
    <scope>NUCLEOTIDE SEQUENCE [GENOMIC DNA / MRNA]</scope>
    <source>
        <strain>129/SvJ</strain>
    </source>
</reference>
<reference key="4">
    <citation type="submission" date="1999-02" db="EMBL/GenBank/DDBJ databases">
        <title>Characterization of mouse type I peroxiredoxin gene and pseudogenes.</title>
        <authorList>
            <person name="Hino K."/>
            <person name="Sato H."/>
            <person name="Bannai S."/>
        </authorList>
    </citation>
    <scope>NUCLEOTIDE SEQUENCE [GENOMIC DNA]</scope>
    <source>
        <strain>129/SvJ</strain>
        <tissue>Liver</tissue>
    </source>
</reference>
<reference key="5">
    <citation type="journal article" date="2005" name="Science">
        <title>The transcriptional landscape of the mammalian genome.</title>
        <authorList>
            <person name="Carninci P."/>
            <person name="Kasukawa T."/>
            <person name="Katayama S."/>
            <person name="Gough J."/>
            <person name="Frith M.C."/>
            <person name="Maeda N."/>
            <person name="Oyama R."/>
            <person name="Ravasi T."/>
            <person name="Lenhard B."/>
            <person name="Wells C."/>
            <person name="Kodzius R."/>
            <person name="Shimokawa K."/>
            <person name="Bajic V.B."/>
            <person name="Brenner S.E."/>
            <person name="Batalov S."/>
            <person name="Forrest A.R."/>
            <person name="Zavolan M."/>
            <person name="Davis M.J."/>
            <person name="Wilming L.G."/>
            <person name="Aidinis V."/>
            <person name="Allen J.E."/>
            <person name="Ambesi-Impiombato A."/>
            <person name="Apweiler R."/>
            <person name="Aturaliya R.N."/>
            <person name="Bailey T.L."/>
            <person name="Bansal M."/>
            <person name="Baxter L."/>
            <person name="Beisel K.W."/>
            <person name="Bersano T."/>
            <person name="Bono H."/>
            <person name="Chalk A.M."/>
            <person name="Chiu K.P."/>
            <person name="Choudhary V."/>
            <person name="Christoffels A."/>
            <person name="Clutterbuck D.R."/>
            <person name="Crowe M.L."/>
            <person name="Dalla E."/>
            <person name="Dalrymple B.P."/>
            <person name="de Bono B."/>
            <person name="Della Gatta G."/>
            <person name="di Bernardo D."/>
            <person name="Down T."/>
            <person name="Engstrom P."/>
            <person name="Fagiolini M."/>
            <person name="Faulkner G."/>
            <person name="Fletcher C.F."/>
            <person name="Fukushima T."/>
            <person name="Furuno M."/>
            <person name="Futaki S."/>
            <person name="Gariboldi M."/>
            <person name="Georgii-Hemming P."/>
            <person name="Gingeras T.R."/>
            <person name="Gojobori T."/>
            <person name="Green R.E."/>
            <person name="Gustincich S."/>
            <person name="Harbers M."/>
            <person name="Hayashi Y."/>
            <person name="Hensch T.K."/>
            <person name="Hirokawa N."/>
            <person name="Hill D."/>
            <person name="Huminiecki L."/>
            <person name="Iacono M."/>
            <person name="Ikeo K."/>
            <person name="Iwama A."/>
            <person name="Ishikawa T."/>
            <person name="Jakt M."/>
            <person name="Kanapin A."/>
            <person name="Katoh M."/>
            <person name="Kawasawa Y."/>
            <person name="Kelso J."/>
            <person name="Kitamura H."/>
            <person name="Kitano H."/>
            <person name="Kollias G."/>
            <person name="Krishnan S.P."/>
            <person name="Kruger A."/>
            <person name="Kummerfeld S.K."/>
            <person name="Kurochkin I.V."/>
            <person name="Lareau L.F."/>
            <person name="Lazarevic D."/>
            <person name="Lipovich L."/>
            <person name="Liu J."/>
            <person name="Liuni S."/>
            <person name="McWilliam S."/>
            <person name="Madan Babu M."/>
            <person name="Madera M."/>
            <person name="Marchionni L."/>
            <person name="Matsuda H."/>
            <person name="Matsuzawa S."/>
            <person name="Miki H."/>
            <person name="Mignone F."/>
            <person name="Miyake S."/>
            <person name="Morris K."/>
            <person name="Mottagui-Tabar S."/>
            <person name="Mulder N."/>
            <person name="Nakano N."/>
            <person name="Nakauchi H."/>
            <person name="Ng P."/>
            <person name="Nilsson R."/>
            <person name="Nishiguchi S."/>
            <person name="Nishikawa S."/>
            <person name="Nori F."/>
            <person name="Ohara O."/>
            <person name="Okazaki Y."/>
            <person name="Orlando V."/>
            <person name="Pang K.C."/>
            <person name="Pavan W.J."/>
            <person name="Pavesi G."/>
            <person name="Pesole G."/>
            <person name="Petrovsky N."/>
            <person name="Piazza S."/>
            <person name="Reed J."/>
            <person name="Reid J.F."/>
            <person name="Ring B.Z."/>
            <person name="Ringwald M."/>
            <person name="Rost B."/>
            <person name="Ruan Y."/>
            <person name="Salzberg S.L."/>
            <person name="Sandelin A."/>
            <person name="Schneider C."/>
            <person name="Schoenbach C."/>
            <person name="Sekiguchi K."/>
            <person name="Semple C.A."/>
            <person name="Seno S."/>
            <person name="Sessa L."/>
            <person name="Sheng Y."/>
            <person name="Shibata Y."/>
            <person name="Shimada H."/>
            <person name="Shimada K."/>
            <person name="Silva D."/>
            <person name="Sinclair B."/>
            <person name="Sperling S."/>
            <person name="Stupka E."/>
            <person name="Sugiura K."/>
            <person name="Sultana R."/>
            <person name="Takenaka Y."/>
            <person name="Taki K."/>
            <person name="Tammoja K."/>
            <person name="Tan S.L."/>
            <person name="Tang S."/>
            <person name="Taylor M.S."/>
            <person name="Tegner J."/>
            <person name="Teichmann S.A."/>
            <person name="Ueda H.R."/>
            <person name="van Nimwegen E."/>
            <person name="Verardo R."/>
            <person name="Wei C.L."/>
            <person name="Yagi K."/>
            <person name="Yamanishi H."/>
            <person name="Zabarovsky E."/>
            <person name="Zhu S."/>
            <person name="Zimmer A."/>
            <person name="Hide W."/>
            <person name="Bult C."/>
            <person name="Grimmond S.M."/>
            <person name="Teasdale R.D."/>
            <person name="Liu E.T."/>
            <person name="Brusic V."/>
            <person name="Quackenbush J."/>
            <person name="Wahlestedt C."/>
            <person name="Mattick J.S."/>
            <person name="Hume D.A."/>
            <person name="Kai C."/>
            <person name="Sasaki D."/>
            <person name="Tomaru Y."/>
            <person name="Fukuda S."/>
            <person name="Kanamori-Katayama M."/>
            <person name="Suzuki M."/>
            <person name="Aoki J."/>
            <person name="Arakawa T."/>
            <person name="Iida J."/>
            <person name="Imamura K."/>
            <person name="Itoh M."/>
            <person name="Kato T."/>
            <person name="Kawaji H."/>
            <person name="Kawagashira N."/>
            <person name="Kawashima T."/>
            <person name="Kojima M."/>
            <person name="Kondo S."/>
            <person name="Konno H."/>
            <person name="Nakano K."/>
            <person name="Ninomiya N."/>
            <person name="Nishio T."/>
            <person name="Okada M."/>
            <person name="Plessy C."/>
            <person name="Shibata K."/>
            <person name="Shiraki T."/>
            <person name="Suzuki S."/>
            <person name="Tagami M."/>
            <person name="Waki K."/>
            <person name="Watahiki A."/>
            <person name="Okamura-Oho Y."/>
            <person name="Suzuki H."/>
            <person name="Kawai J."/>
            <person name="Hayashizaki Y."/>
        </authorList>
    </citation>
    <scope>NUCLEOTIDE SEQUENCE [LARGE SCALE MRNA]</scope>
    <source>
        <strain>C57BL/6J</strain>
        <tissue>Bone marrow</tissue>
        <tissue>Hippocampus</tissue>
        <tissue>Kidney</tissue>
        <tissue>Liver</tissue>
        <tissue>Mammary gland</tissue>
        <tissue>Stomach</tissue>
    </source>
</reference>
<reference key="6">
    <citation type="journal article" date="2004" name="Genome Res.">
        <title>The status, quality, and expansion of the NIH full-length cDNA project: the Mammalian Gene Collection (MGC).</title>
        <authorList>
            <consortium name="The MGC Project Team"/>
        </authorList>
    </citation>
    <scope>NUCLEOTIDE SEQUENCE [LARGE SCALE MRNA]</scope>
    <source>
        <strain>C57BL/6J</strain>
        <tissue>Brain</tissue>
    </source>
</reference>
<reference key="7">
    <citation type="submission" date="2007-07" db="UniProtKB">
        <authorList>
            <person name="Lubec G."/>
            <person name="Kang S.U."/>
            <person name="Klug S."/>
            <person name="Yang J.W."/>
            <person name="Zigmond M."/>
        </authorList>
    </citation>
    <scope>PROTEIN SEQUENCE OF 17-27; 94-109; 111-120; 141-151; 159-168 AND 173-190</scope>
    <scope>IDENTIFICATION BY MASS SPECTROMETRY</scope>
    <source>
        <strain>C57BL/6J</strain>
        <tissue>Brain</tissue>
        <tissue>Hippocampus</tissue>
    </source>
</reference>
<reference key="8">
    <citation type="journal article" date="2009" name="Cell">
        <title>The antioxidant enzyme Prdx1 controls neuronal differentiation by thiol-redox-dependent activation of GDE2.</title>
        <authorList>
            <person name="Yan Y."/>
            <person name="Sabharwal P."/>
            <person name="Rao M."/>
            <person name="Sockanathan S."/>
        </authorList>
    </citation>
    <scope>FUNCTION</scope>
    <scope>DISRUPTION PHENOTYPE</scope>
</reference>
<reference key="9">
    <citation type="journal article" date="2010" name="Cell">
        <title>A tissue-specific atlas of mouse protein phosphorylation and expression.</title>
        <authorList>
            <person name="Huttlin E.L."/>
            <person name="Jedrychowski M.P."/>
            <person name="Elias J.E."/>
            <person name="Goswami T."/>
            <person name="Rad R."/>
            <person name="Beausoleil S.A."/>
            <person name="Villen J."/>
            <person name="Haas W."/>
            <person name="Sowa M.E."/>
            <person name="Gygi S.P."/>
        </authorList>
    </citation>
    <scope>IDENTIFICATION BY MASS SPECTROMETRY [LARGE SCALE ANALYSIS]</scope>
    <source>
        <tissue>Brain</tissue>
        <tissue>Brown adipose tissue</tissue>
        <tissue>Heart</tissue>
        <tissue>Kidney</tissue>
        <tissue>Liver</tissue>
        <tissue>Lung</tissue>
        <tissue>Pancreas</tissue>
        <tissue>Spleen</tissue>
        <tissue>Testis</tissue>
    </source>
</reference>
<reference key="10">
    <citation type="journal article" date="2011" name="Proc. Natl. Acad. Sci. U.S.A.">
        <title>Tumor suppressor down-regulated in renal cell carcinoma 1 (DRR1) is a stress-induced actin bundling factor that modulates synaptic efficacy and cognition.</title>
        <authorList>
            <person name="Schmidt M.V."/>
            <person name="Schuelke J.P."/>
            <person name="Liebl C."/>
            <person name="Stiess M."/>
            <person name="Avrabos C."/>
            <person name="Bock J."/>
            <person name="Wochnik G.M."/>
            <person name="Davies H.A."/>
            <person name="Zimmermann N."/>
            <person name="Scharf S.H."/>
            <person name="Truembach D."/>
            <person name="Wurst W."/>
            <person name="Zieglgaensberger W."/>
            <person name="Turck C."/>
            <person name="Holsboer F."/>
            <person name="Stewart M.G."/>
            <person name="Bradke F."/>
            <person name="Eder M."/>
            <person name="Mueller M.B."/>
            <person name="Rein T."/>
        </authorList>
    </citation>
    <scope>INTERACTION WITH FAM107A</scope>
</reference>
<reference key="11">
    <citation type="journal article" date="2013" name="Mol. Cell">
        <title>SIRT5-mediated lysine desuccinylation impacts diverse metabolic pathways.</title>
        <authorList>
            <person name="Park J."/>
            <person name="Chen Y."/>
            <person name="Tishkoff D.X."/>
            <person name="Peng C."/>
            <person name="Tan M."/>
            <person name="Dai L."/>
            <person name="Xie Z."/>
            <person name="Zhang Y."/>
            <person name="Zwaans B.M."/>
            <person name="Skinner M.E."/>
            <person name="Lombard D.B."/>
            <person name="Zhao Y."/>
        </authorList>
    </citation>
    <scope>ACETYLATION [LARGE SCALE ANALYSIS] AT LYS-136</scope>
    <scope>SUCCINYLATION [LARGE SCALE ANALYSIS] AT LYS-35</scope>
    <scope>IDENTIFICATION BY MASS SPECTROMETRY [LARGE SCALE ANALYSIS]</scope>
    <source>
        <tissue>Embryonic fibroblast</tissue>
        <tissue>Liver</tissue>
    </source>
</reference>
<proteinExistence type="evidence at protein level"/>
<keyword id="KW-0007">Acetylation</keyword>
<keyword id="KW-0049">Antioxidant</keyword>
<keyword id="KW-0963">Cytoplasm</keyword>
<keyword id="KW-0903">Direct protein sequencing</keyword>
<keyword id="KW-1015">Disulfide bond</keyword>
<keyword id="KW-1017">Isopeptide bond</keyword>
<keyword id="KW-0560">Oxidoreductase</keyword>
<keyword id="KW-0575">Peroxidase</keyword>
<keyword id="KW-0597">Phosphoprotein</keyword>
<keyword id="KW-0676">Redox-active center</keyword>
<keyword id="KW-1185">Reference proteome</keyword>
<keyword id="KW-0832">Ubl conjugation</keyword>
<dbReference type="EC" id="1.11.1.24" evidence="2"/>
<dbReference type="EMBL" id="D16142">
    <property type="protein sequence ID" value="BAA03713.1"/>
    <property type="molecule type" value="mRNA"/>
</dbReference>
<dbReference type="EMBL" id="D21252">
    <property type="protein sequence ID" value="BAA04796.1"/>
    <property type="molecule type" value="mRNA"/>
</dbReference>
<dbReference type="EMBL" id="AF157331">
    <property type="protein sequence ID" value="AAD45323.1"/>
    <property type="molecule type" value="Genomic_DNA"/>
</dbReference>
<dbReference type="EMBL" id="AF157329">
    <property type="protein sequence ID" value="AAD45323.1"/>
    <property type="status" value="JOINED"/>
    <property type="molecule type" value="Genomic_DNA"/>
</dbReference>
<dbReference type="EMBL" id="AF157330">
    <property type="protein sequence ID" value="AAD45323.1"/>
    <property type="status" value="JOINED"/>
    <property type="molecule type" value="Genomic_DNA"/>
</dbReference>
<dbReference type="EMBL" id="AB023564">
    <property type="protein sequence ID" value="BAA86992.1"/>
    <property type="molecule type" value="Genomic_DNA"/>
</dbReference>
<dbReference type="EMBL" id="AK002287">
    <property type="protein sequence ID" value="BAB21990.1"/>
    <property type="molecule type" value="mRNA"/>
</dbReference>
<dbReference type="EMBL" id="AK008711">
    <property type="protein sequence ID" value="BAB25847.1"/>
    <property type="molecule type" value="mRNA"/>
</dbReference>
<dbReference type="EMBL" id="AK010688">
    <property type="protein sequence ID" value="BAB27120.1"/>
    <property type="molecule type" value="mRNA"/>
</dbReference>
<dbReference type="EMBL" id="AK083243">
    <property type="protein sequence ID" value="BAC38827.1"/>
    <property type="molecule type" value="mRNA"/>
</dbReference>
<dbReference type="EMBL" id="AK145138">
    <property type="protein sequence ID" value="BAE26255.1"/>
    <property type="molecule type" value="mRNA"/>
</dbReference>
<dbReference type="EMBL" id="AK150797">
    <property type="protein sequence ID" value="BAE29860.1"/>
    <property type="molecule type" value="mRNA"/>
</dbReference>
<dbReference type="EMBL" id="AK151459">
    <property type="protein sequence ID" value="BAE30417.1"/>
    <property type="molecule type" value="mRNA"/>
</dbReference>
<dbReference type="EMBL" id="AK167624">
    <property type="protein sequence ID" value="BAE39676.1"/>
    <property type="molecule type" value="mRNA"/>
</dbReference>
<dbReference type="EMBL" id="AK169154">
    <property type="protein sequence ID" value="BAE40933.1"/>
    <property type="molecule type" value="mRNA"/>
</dbReference>
<dbReference type="EMBL" id="BC083348">
    <property type="protein sequence ID" value="AAH83348.1"/>
    <property type="molecule type" value="mRNA"/>
</dbReference>
<dbReference type="EMBL" id="BC086648">
    <property type="protein sequence ID" value="AAH86648.1"/>
    <property type="molecule type" value="mRNA"/>
</dbReference>
<dbReference type="CCDS" id="CCDS18515.1"/>
<dbReference type="PIR" id="A48513">
    <property type="entry name" value="A48513"/>
</dbReference>
<dbReference type="RefSeq" id="NP_035164.1">
    <property type="nucleotide sequence ID" value="NM_011034.5"/>
</dbReference>
<dbReference type="SMR" id="P35700"/>
<dbReference type="BioGRID" id="202018">
    <property type="interactions" value="43"/>
</dbReference>
<dbReference type="FunCoup" id="P35700">
    <property type="interactions" value="1573"/>
</dbReference>
<dbReference type="IntAct" id="P35700">
    <property type="interactions" value="21"/>
</dbReference>
<dbReference type="MINT" id="P35700"/>
<dbReference type="STRING" id="10090.ENSMUSP00000114159"/>
<dbReference type="PeroxiBase" id="4555">
    <property type="entry name" value="Mm2CysPrx01-1"/>
</dbReference>
<dbReference type="GlyGen" id="P35700">
    <property type="glycosylation" value="2 sites, 1 N-linked glycan (1 site), 1 O-linked glycan (1 site)"/>
</dbReference>
<dbReference type="iPTMnet" id="P35700"/>
<dbReference type="PhosphoSitePlus" id="P35700"/>
<dbReference type="SwissPalm" id="P35700"/>
<dbReference type="REPRODUCTION-2DPAGE" id="P35700"/>
<dbReference type="CPTAC" id="non-CPTAC-3329"/>
<dbReference type="CPTAC" id="non-CPTAC-3528"/>
<dbReference type="jPOST" id="P35700"/>
<dbReference type="PaxDb" id="10090-ENSMUSP00000114159"/>
<dbReference type="PeptideAtlas" id="P35700"/>
<dbReference type="ProteomicsDB" id="291865"/>
<dbReference type="Pumba" id="P35700"/>
<dbReference type="TopDownProteomics" id="P35700"/>
<dbReference type="Antibodypedia" id="1574">
    <property type="antibodies" value="687 antibodies from 45 providers"/>
</dbReference>
<dbReference type="DNASU" id="18477"/>
<dbReference type="Ensembl" id="ENSMUST00000106470.8">
    <property type="protein sequence ID" value="ENSMUSP00000102078.2"/>
    <property type="gene ID" value="ENSMUSG00000028691.13"/>
</dbReference>
<dbReference type="Ensembl" id="ENSMUST00000135573.8">
    <property type="protein sequence ID" value="ENSMUSP00000114159.2"/>
    <property type="gene ID" value="ENSMUSG00000028691.13"/>
</dbReference>
<dbReference type="GeneID" id="18477"/>
<dbReference type="KEGG" id="mmu:18477"/>
<dbReference type="UCSC" id="uc008uhd.1">
    <property type="organism name" value="mouse"/>
</dbReference>
<dbReference type="AGR" id="MGI:99523"/>
<dbReference type="CTD" id="5052"/>
<dbReference type="MGI" id="MGI:99523">
    <property type="gene designation" value="Prdx1"/>
</dbReference>
<dbReference type="VEuPathDB" id="HostDB:ENSMUSG00000028691"/>
<dbReference type="eggNOG" id="KOG0852">
    <property type="taxonomic scope" value="Eukaryota"/>
</dbReference>
<dbReference type="GeneTree" id="ENSGT00940000154277"/>
<dbReference type="InParanoid" id="P35700"/>
<dbReference type="OMA" id="FWYPKDF"/>
<dbReference type="OrthoDB" id="185659at2759"/>
<dbReference type="PhylomeDB" id="P35700"/>
<dbReference type="TreeFam" id="TF105181"/>
<dbReference type="Reactome" id="R-MMU-3299685">
    <property type="pathway name" value="Detoxification of Reactive Oxygen Species"/>
</dbReference>
<dbReference type="Reactome" id="R-MMU-5628897">
    <property type="pathway name" value="TP53 Regulates Metabolic Genes"/>
</dbReference>
<dbReference type="Reactome" id="R-MMU-9818027">
    <property type="pathway name" value="NFE2L2 regulating anti-oxidant/detoxification enzymes"/>
</dbReference>
<dbReference type="BioGRID-ORCS" id="18477">
    <property type="hits" value="11 hits in 80 CRISPR screens"/>
</dbReference>
<dbReference type="CD-CODE" id="CE726F99">
    <property type="entry name" value="Postsynaptic density"/>
</dbReference>
<dbReference type="ChiTaRS" id="Prdx1">
    <property type="organism name" value="mouse"/>
</dbReference>
<dbReference type="PRO" id="PR:P35700"/>
<dbReference type="Proteomes" id="UP000000589">
    <property type="component" value="Chromosome 4"/>
</dbReference>
<dbReference type="RNAct" id="P35700">
    <property type="molecule type" value="protein"/>
</dbReference>
<dbReference type="Bgee" id="ENSMUSG00000028691">
    <property type="expression patterns" value="Expressed in vas deferens and 273 other cell types or tissues"/>
</dbReference>
<dbReference type="ExpressionAtlas" id="P35700">
    <property type="expression patterns" value="baseline and differential"/>
</dbReference>
<dbReference type="GO" id="GO:0005737">
    <property type="term" value="C:cytoplasm"/>
    <property type="evidence" value="ECO:0000266"/>
    <property type="project" value="MGI"/>
</dbReference>
<dbReference type="GO" id="GO:0005829">
    <property type="term" value="C:cytosol"/>
    <property type="evidence" value="ECO:0000304"/>
    <property type="project" value="Reactome"/>
</dbReference>
<dbReference type="GO" id="GO:0005739">
    <property type="term" value="C:mitochondrion"/>
    <property type="evidence" value="ECO:0007005"/>
    <property type="project" value="MGI"/>
</dbReference>
<dbReference type="GO" id="GO:0043209">
    <property type="term" value="C:myelin sheath"/>
    <property type="evidence" value="ECO:0007005"/>
    <property type="project" value="UniProtKB"/>
</dbReference>
<dbReference type="GO" id="GO:0005634">
    <property type="term" value="C:nucleus"/>
    <property type="evidence" value="ECO:0000266"/>
    <property type="project" value="MGI"/>
</dbReference>
<dbReference type="GO" id="GO:0042802">
    <property type="term" value="F:identical protein binding"/>
    <property type="evidence" value="ECO:0000353"/>
    <property type="project" value="IntAct"/>
</dbReference>
<dbReference type="GO" id="GO:0004601">
    <property type="term" value="F:peroxidase activity"/>
    <property type="evidence" value="ECO:0000266"/>
    <property type="project" value="MGI"/>
</dbReference>
<dbReference type="GO" id="GO:0008379">
    <property type="term" value="F:thioredoxin peroxidase activity"/>
    <property type="evidence" value="ECO:0007669"/>
    <property type="project" value="Ensembl"/>
</dbReference>
<dbReference type="GO" id="GO:0007249">
    <property type="term" value="P:canonical NF-kappaB signal transduction"/>
    <property type="evidence" value="ECO:0000315"/>
    <property type="project" value="MGI"/>
</dbReference>
<dbReference type="GO" id="GO:0034101">
    <property type="term" value="P:erythrocyte homeostasis"/>
    <property type="evidence" value="ECO:0000315"/>
    <property type="project" value="MGI"/>
</dbReference>
<dbReference type="GO" id="GO:0048144">
    <property type="term" value="P:fibroblast proliferation"/>
    <property type="evidence" value="ECO:0000315"/>
    <property type="project" value="MGI"/>
</dbReference>
<dbReference type="GO" id="GO:0042744">
    <property type="term" value="P:hydrogen peroxide catabolic process"/>
    <property type="evidence" value="ECO:0000266"/>
    <property type="project" value="MGI"/>
</dbReference>
<dbReference type="GO" id="GO:0030101">
    <property type="term" value="P:natural killer cell activation"/>
    <property type="evidence" value="ECO:0007669"/>
    <property type="project" value="Ensembl"/>
</dbReference>
<dbReference type="GO" id="GO:0042267">
    <property type="term" value="P:natural killer cell mediated cytotoxicity"/>
    <property type="evidence" value="ECO:0000315"/>
    <property type="project" value="MGI"/>
</dbReference>
<dbReference type="GO" id="GO:1901222">
    <property type="term" value="P:regulation of non-canonical NF-kappaB signal transduction"/>
    <property type="evidence" value="ECO:0000315"/>
    <property type="project" value="MGI"/>
</dbReference>
<dbReference type="GO" id="GO:0032872">
    <property type="term" value="P:regulation of stress-activated MAPK cascade"/>
    <property type="evidence" value="ECO:0000315"/>
    <property type="project" value="MGI"/>
</dbReference>
<dbReference type="GO" id="GO:0019430">
    <property type="term" value="P:removal of superoxide radicals"/>
    <property type="evidence" value="ECO:0000315"/>
    <property type="project" value="MGI"/>
</dbReference>
<dbReference type="GO" id="GO:0006979">
    <property type="term" value="P:response to oxidative stress"/>
    <property type="evidence" value="ECO:0000314"/>
    <property type="project" value="MGI"/>
</dbReference>
<dbReference type="GO" id="GO:0000302">
    <property type="term" value="P:response to reactive oxygen species"/>
    <property type="evidence" value="ECO:0000315"/>
    <property type="project" value="MGI"/>
</dbReference>
<dbReference type="CDD" id="cd03015">
    <property type="entry name" value="PRX_Typ2cys"/>
    <property type="match status" value="1"/>
</dbReference>
<dbReference type="FunFam" id="3.40.30.10:FF:000003">
    <property type="entry name" value="Peroxiredoxin 1"/>
    <property type="match status" value="1"/>
</dbReference>
<dbReference type="Gene3D" id="3.40.30.10">
    <property type="entry name" value="Glutaredoxin"/>
    <property type="match status" value="1"/>
</dbReference>
<dbReference type="InterPro" id="IPR000866">
    <property type="entry name" value="AhpC/TSA"/>
</dbReference>
<dbReference type="InterPro" id="IPR050217">
    <property type="entry name" value="Peroxiredoxin"/>
</dbReference>
<dbReference type="InterPro" id="IPR024706">
    <property type="entry name" value="Peroxiredoxin_AhpC-typ"/>
</dbReference>
<dbReference type="InterPro" id="IPR019479">
    <property type="entry name" value="Peroxiredoxin_C"/>
</dbReference>
<dbReference type="InterPro" id="IPR036249">
    <property type="entry name" value="Thioredoxin-like_sf"/>
</dbReference>
<dbReference type="InterPro" id="IPR013766">
    <property type="entry name" value="Thioredoxin_domain"/>
</dbReference>
<dbReference type="PANTHER" id="PTHR10681:SF111">
    <property type="entry name" value="PEROXIREDOXIN-1"/>
    <property type="match status" value="1"/>
</dbReference>
<dbReference type="PANTHER" id="PTHR10681">
    <property type="entry name" value="THIOREDOXIN PEROXIDASE"/>
    <property type="match status" value="1"/>
</dbReference>
<dbReference type="Pfam" id="PF10417">
    <property type="entry name" value="1-cysPrx_C"/>
    <property type="match status" value="1"/>
</dbReference>
<dbReference type="Pfam" id="PF00578">
    <property type="entry name" value="AhpC-TSA"/>
    <property type="match status" value="1"/>
</dbReference>
<dbReference type="PIRSF" id="PIRSF000239">
    <property type="entry name" value="AHPC"/>
    <property type="match status" value="1"/>
</dbReference>
<dbReference type="SUPFAM" id="SSF52833">
    <property type="entry name" value="Thioredoxin-like"/>
    <property type="match status" value="1"/>
</dbReference>
<dbReference type="PROSITE" id="PS51352">
    <property type="entry name" value="THIOREDOXIN_2"/>
    <property type="match status" value="1"/>
</dbReference>
<feature type="initiator methionine" description="Removed" evidence="2">
    <location>
        <position position="1"/>
    </location>
</feature>
<feature type="chain" id="PRO_0000135077" description="Peroxiredoxin-1">
    <location>
        <begin position="2"/>
        <end position="199"/>
    </location>
</feature>
<feature type="domain" description="Thioredoxin" evidence="3">
    <location>
        <begin position="6"/>
        <end position="165"/>
    </location>
</feature>
<feature type="active site" description="Cysteine sulfenic acid (-SOH) intermediate" evidence="2">
    <location>
        <position position="52"/>
    </location>
</feature>
<feature type="modified residue" description="N-acetylserine" evidence="2">
    <location>
        <position position="2"/>
    </location>
</feature>
<feature type="modified residue" description="N6-acetyllysine; alternate" evidence="2">
    <location>
        <position position="7"/>
    </location>
</feature>
<feature type="modified residue" description="N6-acetyllysine" evidence="2">
    <location>
        <position position="16"/>
    </location>
</feature>
<feature type="modified residue" description="N6-acetyllysine" evidence="2">
    <location>
        <position position="27"/>
    </location>
</feature>
<feature type="modified residue" description="Phosphoserine" evidence="2">
    <location>
        <position position="32"/>
    </location>
</feature>
<feature type="modified residue" description="N6-acetyllysine; alternate" evidence="2">
    <location>
        <position position="35"/>
    </location>
</feature>
<feature type="modified residue" description="N6-succinyllysine; alternate" evidence="7">
    <location>
        <position position="35"/>
    </location>
</feature>
<feature type="modified residue" description="Phosphothreonine" evidence="2">
    <location>
        <position position="90"/>
    </location>
</feature>
<feature type="modified residue" description="N6-acetyllysine" evidence="7">
    <location>
        <position position="136"/>
    </location>
</feature>
<feature type="modified residue" description="N6-acetyllysine" evidence="2">
    <location>
        <position position="197"/>
    </location>
</feature>
<feature type="disulfide bond" description="Interchain (with C-173); in linked form" evidence="2">
    <location>
        <position position="52"/>
    </location>
</feature>
<feature type="disulfide bond" description="Interchain (with C-52; in linked form)" evidence="2">
    <location>
        <position position="173"/>
    </location>
</feature>
<feature type="cross-link" description="Glycyl lysine isopeptide (Lys-Gly) (interchain with G-Cter in SUMO2); alternate" evidence="2">
    <location>
        <position position="7"/>
    </location>
</feature>
<feature type="cross-link" description="Glycyl lysine isopeptide (Lys-Gly) (interchain with G-Cter in SUMO2)" evidence="2">
    <location>
        <position position="120"/>
    </location>
</feature>
<feature type="cross-link" description="Glycyl lysine isopeptide (Lys-Gly) (interchain with G-Cter in SUMO1)" evidence="2">
    <location>
        <position position="185"/>
    </location>
</feature>
<feature type="sequence conflict" description="In Ref. 5; BAB27120." evidence="6" ref="5">
    <original>S</original>
    <variation>F</variation>
    <location>
        <position position="196"/>
    </location>
</feature>
<evidence type="ECO:0000250" key="1">
    <source>
        <dbReference type="UniProtKB" id="P0CB50"/>
    </source>
</evidence>
<evidence type="ECO:0000250" key="2">
    <source>
        <dbReference type="UniProtKB" id="Q06830"/>
    </source>
</evidence>
<evidence type="ECO:0000255" key="3">
    <source>
        <dbReference type="PROSITE-ProRule" id="PRU00691"/>
    </source>
</evidence>
<evidence type="ECO:0000269" key="4">
    <source>
    </source>
</evidence>
<evidence type="ECO:0000269" key="5">
    <source>
    </source>
</evidence>
<evidence type="ECO:0000305" key="6"/>
<evidence type="ECO:0007744" key="7">
    <source>
    </source>
</evidence>
<gene>
    <name type="primary">Prdx1</name>
    <name type="synonym">Msp23</name>
    <name type="synonym">Paga</name>
    <name type="synonym">Tdpx2</name>
</gene>
<name>PRDX1_MOUSE</name>